<evidence type="ECO:0000250" key="1">
    <source>
        <dbReference type="UniProtKB" id="P38820"/>
    </source>
</evidence>
<evidence type="ECO:0000255" key="2">
    <source>
        <dbReference type="HAMAP-Rule" id="MF_03049"/>
    </source>
</evidence>
<gene>
    <name evidence="2" type="primary">UBA4</name>
    <name type="ordered locus">KLLA0E21363g</name>
</gene>
<keyword id="KW-0067">ATP-binding</keyword>
<keyword id="KW-0963">Cytoplasm</keyword>
<keyword id="KW-0479">Metal-binding</keyword>
<keyword id="KW-0511">Multifunctional enzyme</keyword>
<keyword id="KW-0547">Nucleotide-binding</keyword>
<keyword id="KW-0548">Nucleotidyltransferase</keyword>
<keyword id="KW-1185">Reference proteome</keyword>
<keyword id="KW-0808">Transferase</keyword>
<keyword id="KW-0819">tRNA processing</keyword>
<keyword id="KW-0833">Ubl conjugation pathway</keyword>
<keyword id="KW-0862">Zinc</keyword>
<dbReference type="EC" id="2.7.7.-" evidence="2"/>
<dbReference type="EC" id="2.8.1.-" evidence="2"/>
<dbReference type="EMBL" id="CR382125">
    <property type="protein sequence ID" value="CAH00004.1"/>
    <property type="molecule type" value="Genomic_DNA"/>
</dbReference>
<dbReference type="RefSeq" id="XP_454917.1">
    <property type="nucleotide sequence ID" value="XM_454917.1"/>
</dbReference>
<dbReference type="SMR" id="Q6CMC2"/>
<dbReference type="FunCoup" id="Q6CMC2">
    <property type="interactions" value="901"/>
</dbReference>
<dbReference type="STRING" id="284590.Q6CMC2"/>
<dbReference type="PaxDb" id="284590-Q6CMC2"/>
<dbReference type="KEGG" id="kla:KLLA0_E21363g"/>
<dbReference type="eggNOG" id="KOG2017">
    <property type="taxonomic scope" value="Eukaryota"/>
</dbReference>
<dbReference type="HOGENOM" id="CLU_013325_1_2_1"/>
<dbReference type="InParanoid" id="Q6CMC2"/>
<dbReference type="OMA" id="IPDVGMD"/>
<dbReference type="UniPathway" id="UPA00988"/>
<dbReference type="Proteomes" id="UP000000598">
    <property type="component" value="Chromosome E"/>
</dbReference>
<dbReference type="GO" id="GO:0005829">
    <property type="term" value="C:cytosol"/>
    <property type="evidence" value="ECO:0007669"/>
    <property type="project" value="InterPro"/>
</dbReference>
<dbReference type="GO" id="GO:0070566">
    <property type="term" value="F:adenylyltransferase activity"/>
    <property type="evidence" value="ECO:0007669"/>
    <property type="project" value="InterPro"/>
</dbReference>
<dbReference type="GO" id="GO:0005524">
    <property type="term" value="F:ATP binding"/>
    <property type="evidence" value="ECO:0007669"/>
    <property type="project" value="UniProtKB-KW"/>
</dbReference>
<dbReference type="GO" id="GO:0046872">
    <property type="term" value="F:metal ion binding"/>
    <property type="evidence" value="ECO:0007669"/>
    <property type="project" value="UniProtKB-KW"/>
</dbReference>
<dbReference type="GO" id="GO:0004792">
    <property type="term" value="F:thiosulfate-cyanide sulfurtransferase activity"/>
    <property type="evidence" value="ECO:0007669"/>
    <property type="project" value="TreeGrafter"/>
</dbReference>
<dbReference type="GO" id="GO:0042292">
    <property type="term" value="F:URM1 activating enzyme activity"/>
    <property type="evidence" value="ECO:0007669"/>
    <property type="project" value="TreeGrafter"/>
</dbReference>
<dbReference type="GO" id="GO:0032447">
    <property type="term" value="P:protein urmylation"/>
    <property type="evidence" value="ECO:0007669"/>
    <property type="project" value="UniProtKB-UniRule"/>
</dbReference>
<dbReference type="GO" id="GO:0002143">
    <property type="term" value="P:tRNA wobble position uridine thiolation"/>
    <property type="evidence" value="ECO:0007669"/>
    <property type="project" value="InterPro"/>
</dbReference>
<dbReference type="CDD" id="cd00757">
    <property type="entry name" value="ThiF_MoeB_HesA_family"/>
    <property type="match status" value="1"/>
</dbReference>
<dbReference type="FunFam" id="3.40.250.10:FF:000014">
    <property type="entry name" value="Adenylyltransferase and sulfurtransferase MOCS3"/>
    <property type="match status" value="1"/>
</dbReference>
<dbReference type="FunFam" id="3.40.50.720:FF:000033">
    <property type="entry name" value="Adenylyltransferase and sulfurtransferase MOCS3"/>
    <property type="match status" value="1"/>
</dbReference>
<dbReference type="Gene3D" id="3.40.50.720">
    <property type="entry name" value="NAD(P)-binding Rossmann-like Domain"/>
    <property type="match status" value="1"/>
</dbReference>
<dbReference type="Gene3D" id="3.40.250.10">
    <property type="entry name" value="Rhodanese-like domain"/>
    <property type="match status" value="1"/>
</dbReference>
<dbReference type="HAMAP" id="MF_03049">
    <property type="entry name" value="MOCS3_Uba4"/>
    <property type="match status" value="1"/>
</dbReference>
<dbReference type="InterPro" id="IPR028885">
    <property type="entry name" value="MOCS3/Uba4"/>
</dbReference>
<dbReference type="InterPro" id="IPR001763">
    <property type="entry name" value="Rhodanese-like_dom"/>
</dbReference>
<dbReference type="InterPro" id="IPR036873">
    <property type="entry name" value="Rhodanese-like_dom_sf"/>
</dbReference>
<dbReference type="InterPro" id="IPR045886">
    <property type="entry name" value="ThiF/MoeB/HesA"/>
</dbReference>
<dbReference type="InterPro" id="IPR000594">
    <property type="entry name" value="ThiF_NAD_FAD-bd"/>
</dbReference>
<dbReference type="InterPro" id="IPR035985">
    <property type="entry name" value="Ubiquitin-activating_enz"/>
</dbReference>
<dbReference type="PANTHER" id="PTHR10953:SF102">
    <property type="entry name" value="ADENYLYLTRANSFERASE AND SULFURTRANSFERASE MOCS3"/>
    <property type="match status" value="1"/>
</dbReference>
<dbReference type="PANTHER" id="PTHR10953">
    <property type="entry name" value="UBIQUITIN-ACTIVATING ENZYME E1"/>
    <property type="match status" value="1"/>
</dbReference>
<dbReference type="Pfam" id="PF00581">
    <property type="entry name" value="Rhodanese"/>
    <property type="match status" value="1"/>
</dbReference>
<dbReference type="Pfam" id="PF00899">
    <property type="entry name" value="ThiF"/>
    <property type="match status" value="1"/>
</dbReference>
<dbReference type="SMART" id="SM00450">
    <property type="entry name" value="RHOD"/>
    <property type="match status" value="1"/>
</dbReference>
<dbReference type="SUPFAM" id="SSF69572">
    <property type="entry name" value="Activating enzymes of the ubiquitin-like proteins"/>
    <property type="match status" value="1"/>
</dbReference>
<dbReference type="PROSITE" id="PS50206">
    <property type="entry name" value="RHODANESE_3"/>
    <property type="match status" value="1"/>
</dbReference>
<comment type="function">
    <text evidence="2">Plays a central role in 2-thiolation of mcm(5)S(2)U at tRNA wobble positions of cytosolic tRNA(Lys), tRNA(Glu) and tRNA(Gln). Acts by mediating the C-terminal thiocarboxylation of sulfur carrier URM1. Its N-terminus first activates URM1 as acyl-adenylate (-COAMP), then the persulfide sulfur on the catalytic cysteine is transferred to URM1 to form thiocarboxylation (-COSH) of its C-terminus. The reaction probably involves hydrogen sulfide that is generated from the persulfide intermediate and that acts as a nucleophile towards URM1. Subsequently, a transient disulfide bond is formed. Does not use thiosulfate as sulfur donor; NFS1 probably acting as a sulfur donor for thiocarboxylation reactions. Prior mcm(5) tRNA modification by the elongator complex is required for 2-thiolation. May also be involved in protein urmylation.</text>
</comment>
<comment type="cofactor">
    <cofactor evidence="2">
        <name>Zn(2+)</name>
        <dbReference type="ChEBI" id="CHEBI:29105"/>
    </cofactor>
    <text evidence="2">Binds 1 zinc ion per subunit.</text>
</comment>
<comment type="pathway">
    <text evidence="2">tRNA modification; 5-methoxycarbonylmethyl-2-thiouridine-tRNA biosynthesis.</text>
</comment>
<comment type="subcellular location">
    <subcellularLocation>
        <location evidence="1">Cytoplasm</location>
        <location evidence="1">Cytosol</location>
    </subcellularLocation>
</comment>
<comment type="similarity">
    <text evidence="2">In the N-terminal section; belongs to the HesA/MoeB/ThiF family. UBA4 subfamily.</text>
</comment>
<organism>
    <name type="scientific">Kluyveromyces lactis (strain ATCC 8585 / CBS 2359 / DSM 70799 / NBRC 1267 / NRRL Y-1140 / WM37)</name>
    <name type="common">Yeast</name>
    <name type="synonym">Candida sphaerica</name>
    <dbReference type="NCBI Taxonomy" id="284590"/>
    <lineage>
        <taxon>Eukaryota</taxon>
        <taxon>Fungi</taxon>
        <taxon>Dikarya</taxon>
        <taxon>Ascomycota</taxon>
        <taxon>Saccharomycotina</taxon>
        <taxon>Saccharomycetes</taxon>
        <taxon>Saccharomycetales</taxon>
        <taxon>Saccharomycetaceae</taxon>
        <taxon>Kluyveromyces</taxon>
    </lineage>
</organism>
<reference key="1">
    <citation type="journal article" date="2004" name="Nature">
        <title>Genome evolution in yeasts.</title>
        <authorList>
            <person name="Dujon B."/>
            <person name="Sherman D."/>
            <person name="Fischer G."/>
            <person name="Durrens P."/>
            <person name="Casaregola S."/>
            <person name="Lafontaine I."/>
            <person name="de Montigny J."/>
            <person name="Marck C."/>
            <person name="Neuveglise C."/>
            <person name="Talla E."/>
            <person name="Goffard N."/>
            <person name="Frangeul L."/>
            <person name="Aigle M."/>
            <person name="Anthouard V."/>
            <person name="Babour A."/>
            <person name="Barbe V."/>
            <person name="Barnay S."/>
            <person name="Blanchin S."/>
            <person name="Beckerich J.-M."/>
            <person name="Beyne E."/>
            <person name="Bleykasten C."/>
            <person name="Boisrame A."/>
            <person name="Boyer J."/>
            <person name="Cattolico L."/>
            <person name="Confanioleri F."/>
            <person name="de Daruvar A."/>
            <person name="Despons L."/>
            <person name="Fabre E."/>
            <person name="Fairhead C."/>
            <person name="Ferry-Dumazet H."/>
            <person name="Groppi A."/>
            <person name="Hantraye F."/>
            <person name="Hennequin C."/>
            <person name="Jauniaux N."/>
            <person name="Joyet P."/>
            <person name="Kachouri R."/>
            <person name="Kerrest A."/>
            <person name="Koszul R."/>
            <person name="Lemaire M."/>
            <person name="Lesur I."/>
            <person name="Ma L."/>
            <person name="Muller H."/>
            <person name="Nicaud J.-M."/>
            <person name="Nikolski M."/>
            <person name="Oztas S."/>
            <person name="Ozier-Kalogeropoulos O."/>
            <person name="Pellenz S."/>
            <person name="Potier S."/>
            <person name="Richard G.-F."/>
            <person name="Straub M.-L."/>
            <person name="Suleau A."/>
            <person name="Swennen D."/>
            <person name="Tekaia F."/>
            <person name="Wesolowski-Louvel M."/>
            <person name="Westhof E."/>
            <person name="Wirth B."/>
            <person name="Zeniou-Meyer M."/>
            <person name="Zivanovic Y."/>
            <person name="Bolotin-Fukuhara M."/>
            <person name="Thierry A."/>
            <person name="Bouchier C."/>
            <person name="Caudron B."/>
            <person name="Scarpelli C."/>
            <person name="Gaillardin C."/>
            <person name="Weissenbach J."/>
            <person name="Wincker P."/>
            <person name="Souciet J.-L."/>
        </authorList>
    </citation>
    <scope>NUCLEOTIDE SEQUENCE [LARGE SCALE GENOMIC DNA]</scope>
    <source>
        <strain>ATCC 8585 / CBS 2359 / DSM 70799 / NBRC 1267 / NRRL Y-1140 / WM37</strain>
    </source>
</reference>
<protein>
    <recommendedName>
        <fullName evidence="2">Adenylyltransferase and sulfurtransferase UBA4</fullName>
    </recommendedName>
    <alternativeName>
        <fullName evidence="2">Ubiquitin-like protein activator 4</fullName>
    </alternativeName>
    <domain>
        <recommendedName>
            <fullName evidence="2">Adenylyltransferase UBA4</fullName>
            <ecNumber evidence="2">2.7.7.-</ecNumber>
        </recommendedName>
    </domain>
    <domain>
        <recommendedName>
            <fullName evidence="2">Sulfurtransferase UBA4</fullName>
            <ecNumber evidence="2">2.8.1.-</ecNumber>
        </recommendedName>
    </domain>
</protein>
<sequence>MTETERSNESLLEEIENLRVENAKLKNDLCLERSLNNASDLPMSLDEFKRYGRQMIVDETEGLMGQLKLKNASVLVIGAGGLGCPSLPYLAGAGIGKIGIVDNDTVDTSNLHRQVLHDTIKVGMLKSESAKQVLNKLNPHVSVTSYPVRLSNENAFDIFKDYDVILDCTDTPMARYLISDVAVNLGKPVVSASALRTEGQLSIFNFDNVGPCYRCFYPTPPAPTSVSSCQEGGVLGPCVGLVGVAMVVEALKLLLGVYTRENFKPFLLQYSGFPDQTLRKFKMRGRRVDCPACGTGRTVTRESIESGKINYQSFCGSRNYSVLTEDERIDVHKFERDYWNSSKTKPYVLLDVRPSLHYSISHLPNSHNITVNELRDLPADLNNLQSKIPHLSADSEVLVLCRYGNDSQLATRLLKDKFNLKDVKDVKGGFFKYIDEINPSLPKY</sequence>
<accession>Q6CMC2</accession>
<name>UBA4_KLULA</name>
<feature type="chain" id="PRO_0000369227" description="Adenylyltransferase and sulfurtransferase UBA4">
    <location>
        <begin position="1"/>
        <end position="444"/>
    </location>
</feature>
<feature type="domain" description="Rhodanese" evidence="2">
    <location>
        <begin position="343"/>
        <end position="442"/>
    </location>
</feature>
<feature type="active site" description="Glycyl thioester intermediate; for adenylyltransferase activity" evidence="2">
    <location>
        <position position="229"/>
    </location>
</feature>
<feature type="active site" description="Cysteine persulfide intermediate; for sulfurtransferase activity" evidence="2">
    <location>
        <position position="401"/>
    </location>
</feature>
<feature type="binding site" evidence="2">
    <location>
        <position position="81"/>
    </location>
    <ligand>
        <name>ATP</name>
        <dbReference type="ChEBI" id="CHEBI:30616"/>
    </ligand>
</feature>
<feature type="binding site" evidence="2">
    <location>
        <position position="102"/>
    </location>
    <ligand>
        <name>ATP</name>
        <dbReference type="ChEBI" id="CHEBI:30616"/>
    </ligand>
</feature>
<feature type="binding site" evidence="2">
    <location>
        <begin position="109"/>
        <end position="113"/>
    </location>
    <ligand>
        <name>ATP</name>
        <dbReference type="ChEBI" id="CHEBI:30616"/>
    </ligand>
</feature>
<feature type="binding site" evidence="2">
    <location>
        <position position="126"/>
    </location>
    <ligand>
        <name>ATP</name>
        <dbReference type="ChEBI" id="CHEBI:30616"/>
    </ligand>
</feature>
<feature type="binding site" evidence="2">
    <location>
        <begin position="170"/>
        <end position="171"/>
    </location>
    <ligand>
        <name>ATP</name>
        <dbReference type="ChEBI" id="CHEBI:30616"/>
    </ligand>
</feature>
<feature type="binding site" evidence="2">
    <location>
        <position position="212"/>
    </location>
    <ligand>
        <name>Zn(2+)</name>
        <dbReference type="ChEBI" id="CHEBI:29105"/>
    </ligand>
</feature>
<feature type="binding site" evidence="2">
    <location>
        <position position="215"/>
    </location>
    <ligand>
        <name>Zn(2+)</name>
        <dbReference type="ChEBI" id="CHEBI:29105"/>
    </ligand>
</feature>
<feature type="binding site" evidence="2">
    <location>
        <position position="290"/>
    </location>
    <ligand>
        <name>Zn(2+)</name>
        <dbReference type="ChEBI" id="CHEBI:29105"/>
    </ligand>
</feature>
<feature type="binding site" evidence="2">
    <location>
        <position position="293"/>
    </location>
    <ligand>
        <name>Zn(2+)</name>
        <dbReference type="ChEBI" id="CHEBI:29105"/>
    </ligand>
</feature>
<proteinExistence type="inferred from homology"/>